<comment type="function">
    <text evidence="1">Component of the EKC/KEOPS complex that is required for the formation of a threonylcarbamoyl group on adenosine at position 37 (t(6)A37) in tRNAs that read codons beginning with adenine. The complex is probably involved in the transfer of the threonylcarbamoyl moiety of threonylcarbamoyl-AMP (TC-AMP) to the N6 group of A37. OSGEP likely plays a direct catalytic role in this reaction, but requires other protein(s) of the complex to fulfill this activity.</text>
</comment>
<comment type="catalytic activity">
    <reaction evidence="1">
        <text>L-threonylcarbamoyladenylate + adenosine(37) in tRNA = N(6)-L-threonylcarbamoyladenosine(37) in tRNA + AMP + H(+)</text>
        <dbReference type="Rhea" id="RHEA:37059"/>
        <dbReference type="Rhea" id="RHEA-COMP:10162"/>
        <dbReference type="Rhea" id="RHEA-COMP:10163"/>
        <dbReference type="ChEBI" id="CHEBI:15378"/>
        <dbReference type="ChEBI" id="CHEBI:73682"/>
        <dbReference type="ChEBI" id="CHEBI:74411"/>
        <dbReference type="ChEBI" id="CHEBI:74418"/>
        <dbReference type="ChEBI" id="CHEBI:456215"/>
        <dbReference type="EC" id="2.3.1.234"/>
    </reaction>
</comment>
<comment type="cofactor">
    <cofactor evidence="1">
        <name>a divalent metal cation</name>
        <dbReference type="ChEBI" id="CHEBI:60240"/>
    </cofactor>
    <text evidence="1">Binds 1 divalent metal cation per subunit.</text>
</comment>
<comment type="subunit">
    <text evidence="1">Component of the EKC/KEOPS complex composed of at least tp53rk, tprkb, osgep and lage3; the whole complex dimerizes.</text>
</comment>
<comment type="subcellular location">
    <subcellularLocation>
        <location evidence="1">Cytoplasm</location>
    </subcellularLocation>
    <subcellularLocation>
        <location evidence="1">Nucleus</location>
    </subcellularLocation>
</comment>
<comment type="disruption phenotype">
    <text evidence="2 3">Embryos display primary microcephaly, leading to early lethality (PubMed:28805828, PubMed:29346415). Marked apoptosis is observed in the brain (telencephalon) (PubMed:28805828). Fishes do not show a renal phenotype, possibly as a result of early lethality (PubMed:28805828).</text>
</comment>
<comment type="similarity">
    <text evidence="1">Belongs to the KAE1 / TsaD family.</text>
</comment>
<sequence length="335" mass="36728">MTIVIGFEGSANKIGIGIIKDGEVLSNPRRTYITPPGQGFLPGETAKHHRSVILTVLQEALDEAGLKAADIDCVAYTKGPGMGAPLVTVAIVARTVAQLWGKPLLGVNHCIGHIEMGRLITNAQNPTVLYVSGGNTQVIAYSERRYRIFGETIDIAVGNCLDRFARVIKISNDPSPGYNIEQMAKKGNKYIELPYTVKGMDVSFSGILSYIEDAAHKMLSTDQCTPEDLCFSLQETVFAMLVEITERAMAHCGSQEVLIVGGVGCNLRLQEMMGVMCKERGARIFATDESFCIDNGAMIAQAGWEMFRSGHVTELPDSWITQRYRTDEVEVTWRD</sequence>
<dbReference type="EC" id="2.3.1.234" evidence="1"/>
<dbReference type="EMBL" id="BX323558">
    <property type="status" value="NOT_ANNOTATED_CDS"/>
    <property type="molecule type" value="Genomic_DNA"/>
</dbReference>
<dbReference type="EMBL" id="BC093366">
    <property type="protein sequence ID" value="AAH93366.1"/>
    <property type="molecule type" value="mRNA"/>
</dbReference>
<dbReference type="EMBL" id="BC164136">
    <property type="protein sequence ID" value="AAI64136.1"/>
    <property type="molecule type" value="mRNA"/>
</dbReference>
<dbReference type="RefSeq" id="NP_001017751.2">
    <property type="nucleotide sequence ID" value="NM_001017751.2"/>
</dbReference>
<dbReference type="RefSeq" id="XP_021330688.1">
    <property type="nucleotide sequence ID" value="XM_021475013.2"/>
</dbReference>
<dbReference type="SMR" id="Q5RHZ6"/>
<dbReference type="FunCoup" id="Q5RHZ6">
    <property type="interactions" value="1957"/>
</dbReference>
<dbReference type="STRING" id="7955.ENSDARP00000118646"/>
<dbReference type="PaxDb" id="7955-ENSDARP00000118646"/>
<dbReference type="DNASU" id="550447"/>
<dbReference type="Ensembl" id="ENSDART00000067375">
    <property type="protein sequence ID" value="ENSDARP00000067374"/>
    <property type="gene ID" value="ENSDARG00000045846"/>
</dbReference>
<dbReference type="Ensembl" id="ENSDART00000144225">
    <property type="protein sequence ID" value="ENSDARP00000118646"/>
    <property type="gene ID" value="ENSDARG00000045846"/>
</dbReference>
<dbReference type="GeneID" id="550447"/>
<dbReference type="KEGG" id="dre:550447"/>
<dbReference type="AGR" id="ZFIN:ZDB-GENE-030131-7880"/>
<dbReference type="CTD" id="55644"/>
<dbReference type="ZFIN" id="ZDB-GENE-030131-7880">
    <property type="gene designation" value="osgep"/>
</dbReference>
<dbReference type="eggNOG" id="KOG2708">
    <property type="taxonomic scope" value="Eukaryota"/>
</dbReference>
<dbReference type="HOGENOM" id="CLU_023208_2_2_1"/>
<dbReference type="InParanoid" id="Q5RHZ6"/>
<dbReference type="OMA" id="HHRSWVV"/>
<dbReference type="OrthoDB" id="10254073at2759"/>
<dbReference type="PhylomeDB" id="Q5RHZ6"/>
<dbReference type="TreeFam" id="TF313621"/>
<dbReference type="PRO" id="PR:Q5RHZ6"/>
<dbReference type="Proteomes" id="UP000000437">
    <property type="component" value="Chromosome 4"/>
</dbReference>
<dbReference type="Bgee" id="ENSDARG00000045846">
    <property type="expression patterns" value="Expressed in presomitic mesoderm and 24 other cell types or tissues"/>
</dbReference>
<dbReference type="GO" id="GO:0005737">
    <property type="term" value="C:cytoplasm"/>
    <property type="evidence" value="ECO:0000250"/>
    <property type="project" value="UniProtKB"/>
</dbReference>
<dbReference type="GO" id="GO:0000408">
    <property type="term" value="C:EKC/KEOPS complex"/>
    <property type="evidence" value="ECO:0000250"/>
    <property type="project" value="UniProtKB"/>
</dbReference>
<dbReference type="GO" id="GO:0005634">
    <property type="term" value="C:nucleus"/>
    <property type="evidence" value="ECO:0000250"/>
    <property type="project" value="UniProtKB"/>
</dbReference>
<dbReference type="GO" id="GO:0046872">
    <property type="term" value="F:metal ion binding"/>
    <property type="evidence" value="ECO:0007669"/>
    <property type="project" value="UniProtKB-KW"/>
</dbReference>
<dbReference type="GO" id="GO:0061711">
    <property type="term" value="F:N(6)-L-threonylcarbamoyladenine synthase activity"/>
    <property type="evidence" value="ECO:0007669"/>
    <property type="project" value="UniProtKB-EC"/>
</dbReference>
<dbReference type="GO" id="GO:0002949">
    <property type="term" value="P:tRNA threonylcarbamoyladenosine modification"/>
    <property type="evidence" value="ECO:0000250"/>
    <property type="project" value="UniProtKB"/>
</dbReference>
<dbReference type="CDD" id="cd24132">
    <property type="entry name" value="ASKHA_NBD_OSGEP_like_euk"/>
    <property type="match status" value="1"/>
</dbReference>
<dbReference type="FunFam" id="3.30.420.40:FF:000038">
    <property type="entry name" value="Probable tRNA N6-adenosine threonylcarbamoyltransferase"/>
    <property type="match status" value="1"/>
</dbReference>
<dbReference type="FunFam" id="3.30.420.40:FF:000295">
    <property type="entry name" value="Probable tRNA N6-adenosine threonylcarbamoyltransferase"/>
    <property type="match status" value="1"/>
</dbReference>
<dbReference type="Gene3D" id="3.30.420.40">
    <property type="match status" value="2"/>
</dbReference>
<dbReference type="HAMAP" id="MF_01446">
    <property type="entry name" value="Kae1"/>
    <property type="match status" value="1"/>
</dbReference>
<dbReference type="InterPro" id="IPR043129">
    <property type="entry name" value="ATPase_NBD"/>
</dbReference>
<dbReference type="InterPro" id="IPR000905">
    <property type="entry name" value="Gcp-like_dom"/>
</dbReference>
<dbReference type="InterPro" id="IPR017861">
    <property type="entry name" value="KAE1/TsaD"/>
</dbReference>
<dbReference type="InterPro" id="IPR034680">
    <property type="entry name" value="Kae1_archaea_euk"/>
</dbReference>
<dbReference type="InterPro" id="IPR017860">
    <property type="entry name" value="Peptidase_M22_CS"/>
</dbReference>
<dbReference type="NCBIfam" id="TIGR03722">
    <property type="entry name" value="arch_KAE1"/>
    <property type="match status" value="1"/>
</dbReference>
<dbReference type="NCBIfam" id="TIGR00329">
    <property type="entry name" value="gcp_kae1"/>
    <property type="match status" value="1"/>
</dbReference>
<dbReference type="PANTHER" id="PTHR11735">
    <property type="entry name" value="TRNA N6-ADENOSINE THREONYLCARBAMOYLTRANSFERASE"/>
    <property type="match status" value="1"/>
</dbReference>
<dbReference type="PANTHER" id="PTHR11735:SF14">
    <property type="entry name" value="TRNA N6-ADENOSINE THREONYLCARBAMOYLTRANSFERASE"/>
    <property type="match status" value="1"/>
</dbReference>
<dbReference type="Pfam" id="PF00814">
    <property type="entry name" value="TsaD"/>
    <property type="match status" value="1"/>
</dbReference>
<dbReference type="PRINTS" id="PR00789">
    <property type="entry name" value="OSIALOPTASE"/>
</dbReference>
<dbReference type="SUPFAM" id="SSF53067">
    <property type="entry name" value="Actin-like ATPase domain"/>
    <property type="match status" value="1"/>
</dbReference>
<dbReference type="PROSITE" id="PS01016">
    <property type="entry name" value="GLYCOPROTEASE"/>
    <property type="match status" value="1"/>
</dbReference>
<organism>
    <name type="scientific">Danio rerio</name>
    <name type="common">Zebrafish</name>
    <name type="synonym">Brachydanio rerio</name>
    <dbReference type="NCBI Taxonomy" id="7955"/>
    <lineage>
        <taxon>Eukaryota</taxon>
        <taxon>Metazoa</taxon>
        <taxon>Chordata</taxon>
        <taxon>Craniata</taxon>
        <taxon>Vertebrata</taxon>
        <taxon>Euteleostomi</taxon>
        <taxon>Actinopterygii</taxon>
        <taxon>Neopterygii</taxon>
        <taxon>Teleostei</taxon>
        <taxon>Ostariophysi</taxon>
        <taxon>Cypriniformes</taxon>
        <taxon>Danionidae</taxon>
        <taxon>Danioninae</taxon>
        <taxon>Danio</taxon>
    </lineage>
</organism>
<keyword id="KW-0012">Acyltransferase</keyword>
<keyword id="KW-0963">Cytoplasm</keyword>
<keyword id="KW-0479">Metal-binding</keyword>
<keyword id="KW-0539">Nucleus</keyword>
<keyword id="KW-1185">Reference proteome</keyword>
<keyword id="KW-0808">Transferase</keyword>
<keyword id="KW-0819">tRNA processing</keyword>
<accession>Q5RHZ6</accession>
<accession>Q561S3</accession>
<evidence type="ECO:0000255" key="1">
    <source>
        <dbReference type="HAMAP-Rule" id="MF_03180"/>
    </source>
</evidence>
<evidence type="ECO:0000269" key="2">
    <source>
    </source>
</evidence>
<evidence type="ECO:0000269" key="3">
    <source>
    </source>
</evidence>
<evidence type="ECO:0000305" key="4"/>
<evidence type="ECO:0000312" key="5">
    <source>
        <dbReference type="ZFIN" id="ZDB-GENE-030131-7880"/>
    </source>
</evidence>
<proteinExistence type="evidence at transcript level"/>
<name>OSGEP_DANRE</name>
<gene>
    <name evidence="1 5" type="primary">osgep</name>
</gene>
<feature type="chain" id="PRO_0000444043" description="tRNA N6-adenosine threonylcarbamoyltransferase">
    <location>
        <begin position="1"/>
        <end position="335"/>
    </location>
</feature>
<feature type="binding site" evidence="1">
    <location>
        <position position="109"/>
    </location>
    <ligand>
        <name>a divalent metal cation</name>
        <dbReference type="ChEBI" id="CHEBI:60240"/>
    </ligand>
</feature>
<feature type="binding site" evidence="1">
    <location>
        <position position="113"/>
    </location>
    <ligand>
        <name>a divalent metal cation</name>
        <dbReference type="ChEBI" id="CHEBI:60240"/>
    </ligand>
</feature>
<feature type="binding site" evidence="1">
    <location>
        <begin position="130"/>
        <end position="134"/>
    </location>
    <ligand>
        <name>substrate</name>
    </ligand>
</feature>
<feature type="binding site" evidence="1">
    <location>
        <position position="130"/>
    </location>
    <ligand>
        <name>a divalent metal cation</name>
        <dbReference type="ChEBI" id="CHEBI:60240"/>
    </ligand>
</feature>
<feature type="binding site" evidence="1">
    <location>
        <position position="162"/>
    </location>
    <ligand>
        <name>substrate</name>
    </ligand>
</feature>
<feature type="binding site" evidence="1">
    <location>
        <position position="177"/>
    </location>
    <ligand>
        <name>substrate</name>
    </ligand>
</feature>
<feature type="binding site" evidence="1">
    <location>
        <position position="181"/>
    </location>
    <ligand>
        <name>substrate</name>
    </ligand>
</feature>
<feature type="binding site" evidence="1">
    <location>
        <position position="266"/>
    </location>
    <ligand>
        <name>substrate</name>
    </ligand>
</feature>
<feature type="binding site" evidence="1">
    <location>
        <position position="294"/>
    </location>
    <ligand>
        <name>a divalent metal cation</name>
        <dbReference type="ChEBI" id="CHEBI:60240"/>
    </ligand>
</feature>
<feature type="sequence conflict" description="In Ref. 2; AAH93366/AAI64136." evidence="4" ref="2">
    <original>I</original>
    <variation>L</variation>
    <location>
        <position position="284"/>
    </location>
</feature>
<reference key="1">
    <citation type="journal article" date="2013" name="Nature">
        <title>The zebrafish reference genome sequence and its relationship to the human genome.</title>
        <authorList>
            <person name="Howe K."/>
            <person name="Clark M.D."/>
            <person name="Torroja C.F."/>
            <person name="Torrance J."/>
            <person name="Berthelot C."/>
            <person name="Muffato M."/>
            <person name="Collins J.E."/>
            <person name="Humphray S."/>
            <person name="McLaren K."/>
            <person name="Matthews L."/>
            <person name="McLaren S."/>
            <person name="Sealy I."/>
            <person name="Caccamo M."/>
            <person name="Churcher C."/>
            <person name="Scott C."/>
            <person name="Barrett J.C."/>
            <person name="Koch R."/>
            <person name="Rauch G.J."/>
            <person name="White S."/>
            <person name="Chow W."/>
            <person name="Kilian B."/>
            <person name="Quintais L.T."/>
            <person name="Guerra-Assuncao J.A."/>
            <person name="Zhou Y."/>
            <person name="Gu Y."/>
            <person name="Yen J."/>
            <person name="Vogel J.H."/>
            <person name="Eyre T."/>
            <person name="Redmond S."/>
            <person name="Banerjee R."/>
            <person name="Chi J."/>
            <person name="Fu B."/>
            <person name="Langley E."/>
            <person name="Maguire S.F."/>
            <person name="Laird G.K."/>
            <person name="Lloyd D."/>
            <person name="Kenyon E."/>
            <person name="Donaldson S."/>
            <person name="Sehra H."/>
            <person name="Almeida-King J."/>
            <person name="Loveland J."/>
            <person name="Trevanion S."/>
            <person name="Jones M."/>
            <person name="Quail M."/>
            <person name="Willey D."/>
            <person name="Hunt A."/>
            <person name="Burton J."/>
            <person name="Sims S."/>
            <person name="McLay K."/>
            <person name="Plumb B."/>
            <person name="Davis J."/>
            <person name="Clee C."/>
            <person name="Oliver K."/>
            <person name="Clark R."/>
            <person name="Riddle C."/>
            <person name="Elliot D."/>
            <person name="Threadgold G."/>
            <person name="Harden G."/>
            <person name="Ware D."/>
            <person name="Begum S."/>
            <person name="Mortimore B."/>
            <person name="Kerry G."/>
            <person name="Heath P."/>
            <person name="Phillimore B."/>
            <person name="Tracey A."/>
            <person name="Corby N."/>
            <person name="Dunn M."/>
            <person name="Johnson C."/>
            <person name="Wood J."/>
            <person name="Clark S."/>
            <person name="Pelan S."/>
            <person name="Griffiths G."/>
            <person name="Smith M."/>
            <person name="Glithero R."/>
            <person name="Howden P."/>
            <person name="Barker N."/>
            <person name="Lloyd C."/>
            <person name="Stevens C."/>
            <person name="Harley J."/>
            <person name="Holt K."/>
            <person name="Panagiotidis G."/>
            <person name="Lovell J."/>
            <person name="Beasley H."/>
            <person name="Henderson C."/>
            <person name="Gordon D."/>
            <person name="Auger K."/>
            <person name="Wright D."/>
            <person name="Collins J."/>
            <person name="Raisen C."/>
            <person name="Dyer L."/>
            <person name="Leung K."/>
            <person name="Robertson L."/>
            <person name="Ambridge K."/>
            <person name="Leongamornlert D."/>
            <person name="McGuire S."/>
            <person name="Gilderthorp R."/>
            <person name="Griffiths C."/>
            <person name="Manthravadi D."/>
            <person name="Nichol S."/>
            <person name="Barker G."/>
            <person name="Whitehead S."/>
            <person name="Kay M."/>
            <person name="Brown J."/>
            <person name="Murnane C."/>
            <person name="Gray E."/>
            <person name="Humphries M."/>
            <person name="Sycamore N."/>
            <person name="Barker D."/>
            <person name="Saunders D."/>
            <person name="Wallis J."/>
            <person name="Babbage A."/>
            <person name="Hammond S."/>
            <person name="Mashreghi-Mohammadi M."/>
            <person name="Barr L."/>
            <person name="Martin S."/>
            <person name="Wray P."/>
            <person name="Ellington A."/>
            <person name="Matthews N."/>
            <person name="Ellwood M."/>
            <person name="Woodmansey R."/>
            <person name="Clark G."/>
            <person name="Cooper J."/>
            <person name="Tromans A."/>
            <person name="Grafham D."/>
            <person name="Skuce C."/>
            <person name="Pandian R."/>
            <person name="Andrews R."/>
            <person name="Harrison E."/>
            <person name="Kimberley A."/>
            <person name="Garnett J."/>
            <person name="Fosker N."/>
            <person name="Hall R."/>
            <person name="Garner P."/>
            <person name="Kelly D."/>
            <person name="Bird C."/>
            <person name="Palmer S."/>
            <person name="Gehring I."/>
            <person name="Berger A."/>
            <person name="Dooley C.M."/>
            <person name="Ersan-Urun Z."/>
            <person name="Eser C."/>
            <person name="Geiger H."/>
            <person name="Geisler M."/>
            <person name="Karotki L."/>
            <person name="Kirn A."/>
            <person name="Konantz J."/>
            <person name="Konantz M."/>
            <person name="Oberlander M."/>
            <person name="Rudolph-Geiger S."/>
            <person name="Teucke M."/>
            <person name="Lanz C."/>
            <person name="Raddatz G."/>
            <person name="Osoegawa K."/>
            <person name="Zhu B."/>
            <person name="Rapp A."/>
            <person name="Widaa S."/>
            <person name="Langford C."/>
            <person name="Yang F."/>
            <person name="Schuster S.C."/>
            <person name="Carter N.P."/>
            <person name="Harrow J."/>
            <person name="Ning Z."/>
            <person name="Herrero J."/>
            <person name="Searle S.M."/>
            <person name="Enright A."/>
            <person name="Geisler R."/>
            <person name="Plasterk R.H."/>
            <person name="Lee C."/>
            <person name="Westerfield M."/>
            <person name="de Jong P.J."/>
            <person name="Zon L.I."/>
            <person name="Postlethwait J.H."/>
            <person name="Nusslein-Volhard C."/>
            <person name="Hubbard T.J."/>
            <person name="Roest Crollius H."/>
            <person name="Rogers J."/>
            <person name="Stemple D.L."/>
        </authorList>
    </citation>
    <scope>NUCLEOTIDE SEQUENCE [LARGE SCALE GENOMIC DNA]</scope>
    <source>
        <strain>Tuebingen</strain>
    </source>
</reference>
<reference key="2">
    <citation type="submission" date="2008-04" db="EMBL/GenBank/DDBJ databases">
        <authorList>
            <consortium name="NIH - Zebrafish Gene Collection (ZGC) project"/>
        </authorList>
    </citation>
    <scope>NUCLEOTIDE SEQUENCE [LARGE SCALE MRNA]</scope>
    <source>
        <tissue>Heart</tissue>
    </source>
</reference>
<reference key="3">
    <citation type="journal article" date="2018" name="PLoS ONE">
        <title>Acute multi-sgRNA knockdown of KEOPS complex genes reproduces the microcephaly phenotype of the stable knockout zebrafish model.</title>
        <authorList>
            <person name="Jobst-Schwan T."/>
            <person name="Schmidt J.M."/>
            <person name="Schneider R."/>
            <person name="Hoogstraten C.A."/>
            <person name="Ullmann J.F.P."/>
            <person name="Schapiro D."/>
            <person name="Majmundar A.J."/>
            <person name="Kolb A."/>
            <person name="Eddy K."/>
            <person name="Shril S."/>
            <person name="Braun D.A."/>
            <person name="Poduri A."/>
            <person name="Hildebrandt F."/>
        </authorList>
    </citation>
    <scope>DISRUPTION PHENOTYPE</scope>
</reference>
<reference key="4">
    <citation type="journal article" date="2017" name="Nat. Genet.">
        <title>Mutations in KEOPS-complex genes cause nephrotic syndrome with primary microcephaly.</title>
        <authorList>
            <person name="Braun D.A."/>
            <person name="Rao J."/>
            <person name="Mollet G."/>
            <person name="Schapiro D."/>
            <person name="Daugeron M.C."/>
            <person name="Tan W."/>
            <person name="Gribouval O."/>
            <person name="Boyer O."/>
            <person name="Revy P."/>
            <person name="Jobst-Schwan T."/>
            <person name="Schmidt J.M."/>
            <person name="Lawson J.A."/>
            <person name="Schanze D."/>
            <person name="Ashraf S."/>
            <person name="Ullmann J.F.P."/>
            <person name="Hoogstraten C.A."/>
            <person name="Boddaert N."/>
            <person name="Collinet B."/>
            <person name="Martin G."/>
            <person name="Liger D."/>
            <person name="Lovric S."/>
            <person name="Furlano M."/>
            <person name="Guerrera I.C."/>
            <person name="Sanchez-Ferras O."/>
            <person name="Hu J.F."/>
            <person name="Boschat A.C."/>
            <person name="Sanquer S."/>
            <person name="Menten B."/>
            <person name="Vergult S."/>
            <person name="De Rocker N."/>
            <person name="Airik M."/>
            <person name="Hermle T."/>
            <person name="Shril S."/>
            <person name="Widmeier E."/>
            <person name="Gee H.Y."/>
            <person name="Choi W.I."/>
            <person name="Sadowski C.E."/>
            <person name="Pabst W.L."/>
            <person name="Warejko J.K."/>
            <person name="Daga A."/>
            <person name="Basta T."/>
            <person name="Matejas V."/>
            <person name="Scharmann K."/>
            <person name="Kienast S.D."/>
            <person name="Behnam B."/>
            <person name="Beeson B."/>
            <person name="Begtrup A."/>
            <person name="Bruce M."/>
            <person name="Ch'ng G.S."/>
            <person name="Lin S.P."/>
            <person name="Chang J.H."/>
            <person name="Chen C.H."/>
            <person name="Cho M.T."/>
            <person name="Gaffney P.M."/>
            <person name="Gipson P.E."/>
            <person name="Hsu C.H."/>
            <person name="Kari J.A."/>
            <person name="Ke Y.Y."/>
            <person name="Kiraly-Borri C."/>
            <person name="Lai W.M."/>
            <person name="Lemyre E."/>
            <person name="Littlejohn R.O."/>
            <person name="Masri A."/>
            <person name="Moghtaderi M."/>
            <person name="Nakamura K."/>
            <person name="Ozaltin F."/>
            <person name="Praet M."/>
            <person name="Prasad C."/>
            <person name="Prytula A."/>
            <person name="Roeder E.R."/>
            <person name="Rump P."/>
            <person name="Schnur R.E."/>
            <person name="Shiihara T."/>
            <person name="Sinha M.D."/>
            <person name="Soliman N.A."/>
            <person name="Soulami K."/>
            <person name="Sweetser D.A."/>
            <person name="Tsai W.H."/>
            <person name="Tsai J.D."/>
            <person name="Topaloglu R."/>
            <person name="Vester U."/>
            <person name="Viskochil D.H."/>
            <person name="Vatanavicharn N."/>
            <person name="Waxler J.L."/>
            <person name="Wierenga K.J."/>
            <person name="Wolf M.T.F."/>
            <person name="Wong S.N."/>
            <person name="Leidel S.A."/>
            <person name="Truglio G."/>
            <person name="Dedon P.C."/>
            <person name="Poduri A."/>
            <person name="Mane S."/>
            <person name="Lifton R.P."/>
            <person name="Bouchard M."/>
            <person name="Kannu P."/>
            <person name="Chitayat D."/>
            <person name="Magen D."/>
            <person name="Callewaert B."/>
            <person name="van Tilbeurgh H."/>
            <person name="Zenker M."/>
            <person name="Antignac C."/>
            <person name="Hildebrandt F."/>
        </authorList>
    </citation>
    <scope>DISRUPTION PHENOTYPE</scope>
</reference>
<protein>
    <recommendedName>
        <fullName evidence="1">tRNA N6-adenosine threonylcarbamoyltransferase</fullName>
        <ecNumber evidence="1">2.3.1.234</ecNumber>
    </recommendedName>
    <alternativeName>
        <fullName evidence="1">O-sialoglycoprotein endopeptidase</fullName>
    </alternativeName>
    <alternativeName>
        <fullName evidence="1">t(6)A37 threonylcarbamoyladenosine biosynthesis protein osgep</fullName>
    </alternativeName>
    <alternativeName>
        <fullName evidence="1">tRNA threonylcarbamoyladenosine biosynthesis protein osgep</fullName>
    </alternativeName>
</protein>